<evidence type="ECO:0000255" key="1">
    <source>
        <dbReference type="PROSITE-ProRule" id="PRU00532"/>
    </source>
</evidence>
<evidence type="ECO:0000269" key="2">
    <source>
    </source>
</evidence>
<evidence type="ECO:0000269" key="3">
    <source>
    </source>
</evidence>
<evidence type="ECO:0000269" key="4">
    <source>
    </source>
</evidence>
<evidence type="ECO:0000269" key="5">
    <source>
    </source>
</evidence>
<evidence type="ECO:0000269" key="6">
    <source>
    </source>
</evidence>
<evidence type="ECO:0000305" key="7"/>
<reference key="1">
    <citation type="journal article" date="1996" name="Cell">
        <title>HOOKLESS1, an ethylene response gene, is required for differential cell elongation in the Arabidopsis hypocotyl.</title>
        <authorList>
            <person name="Lehman A."/>
            <person name="Black R."/>
            <person name="Ecker J.R."/>
        </authorList>
    </citation>
    <scope>NUCLEOTIDE SEQUENCE [GENOMIC DNA / MRNA]</scope>
    <scope>INDUCTION</scope>
    <scope>DISRUPTION PHENOTYPE</scope>
    <scope>MUTAGENESIS OF LEU-327 AND GLU-346</scope>
    <source>
        <strain>cv. Columbia</strain>
    </source>
</reference>
<reference key="2">
    <citation type="journal article" date="1999" name="Nature">
        <title>Sequence and analysis of chromosome 4 of the plant Arabidopsis thaliana.</title>
        <authorList>
            <person name="Mayer K.F.X."/>
            <person name="Schueller C."/>
            <person name="Wambutt R."/>
            <person name="Murphy G."/>
            <person name="Volckaert G."/>
            <person name="Pohl T."/>
            <person name="Duesterhoeft A."/>
            <person name="Stiekema W."/>
            <person name="Entian K.-D."/>
            <person name="Terryn N."/>
            <person name="Harris B."/>
            <person name="Ansorge W."/>
            <person name="Brandt P."/>
            <person name="Grivell L.A."/>
            <person name="Rieger M."/>
            <person name="Weichselgartner M."/>
            <person name="de Simone V."/>
            <person name="Obermaier B."/>
            <person name="Mache R."/>
            <person name="Mueller M."/>
            <person name="Kreis M."/>
            <person name="Delseny M."/>
            <person name="Puigdomenech P."/>
            <person name="Watson M."/>
            <person name="Schmidtheini T."/>
            <person name="Reichert B."/>
            <person name="Portetelle D."/>
            <person name="Perez-Alonso M."/>
            <person name="Boutry M."/>
            <person name="Bancroft I."/>
            <person name="Vos P."/>
            <person name="Hoheisel J."/>
            <person name="Zimmermann W."/>
            <person name="Wedler H."/>
            <person name="Ridley P."/>
            <person name="Langham S.-A."/>
            <person name="McCullagh B."/>
            <person name="Bilham L."/>
            <person name="Robben J."/>
            <person name="van der Schueren J."/>
            <person name="Grymonprez B."/>
            <person name="Chuang Y.-J."/>
            <person name="Vandenbussche F."/>
            <person name="Braeken M."/>
            <person name="Weltjens I."/>
            <person name="Voet M."/>
            <person name="Bastiaens I."/>
            <person name="Aert R."/>
            <person name="Defoor E."/>
            <person name="Weitzenegger T."/>
            <person name="Bothe G."/>
            <person name="Ramsperger U."/>
            <person name="Hilbert H."/>
            <person name="Braun M."/>
            <person name="Holzer E."/>
            <person name="Brandt A."/>
            <person name="Peters S."/>
            <person name="van Staveren M."/>
            <person name="Dirkse W."/>
            <person name="Mooijman P."/>
            <person name="Klein Lankhorst R."/>
            <person name="Rose M."/>
            <person name="Hauf J."/>
            <person name="Koetter P."/>
            <person name="Berneiser S."/>
            <person name="Hempel S."/>
            <person name="Feldpausch M."/>
            <person name="Lamberth S."/>
            <person name="Van den Daele H."/>
            <person name="De Keyser A."/>
            <person name="Buysshaert C."/>
            <person name="Gielen J."/>
            <person name="Villarroel R."/>
            <person name="De Clercq R."/>
            <person name="van Montagu M."/>
            <person name="Rogers J."/>
            <person name="Cronin A."/>
            <person name="Quail M.A."/>
            <person name="Bray-Allen S."/>
            <person name="Clark L."/>
            <person name="Doggett J."/>
            <person name="Hall S."/>
            <person name="Kay M."/>
            <person name="Lennard N."/>
            <person name="McLay K."/>
            <person name="Mayes R."/>
            <person name="Pettett A."/>
            <person name="Rajandream M.A."/>
            <person name="Lyne M."/>
            <person name="Benes V."/>
            <person name="Rechmann S."/>
            <person name="Borkova D."/>
            <person name="Bloecker H."/>
            <person name="Scharfe M."/>
            <person name="Grimm M."/>
            <person name="Loehnert T.-H."/>
            <person name="Dose S."/>
            <person name="de Haan M."/>
            <person name="Maarse A.C."/>
            <person name="Schaefer M."/>
            <person name="Mueller-Auer S."/>
            <person name="Gabel C."/>
            <person name="Fuchs M."/>
            <person name="Fartmann B."/>
            <person name="Granderath K."/>
            <person name="Dauner D."/>
            <person name="Herzl A."/>
            <person name="Neumann S."/>
            <person name="Argiriou A."/>
            <person name="Vitale D."/>
            <person name="Liguori R."/>
            <person name="Piravandi E."/>
            <person name="Massenet O."/>
            <person name="Quigley F."/>
            <person name="Clabauld G."/>
            <person name="Muendlein A."/>
            <person name="Felber R."/>
            <person name="Schnabl S."/>
            <person name="Hiller R."/>
            <person name="Schmidt W."/>
            <person name="Lecharny A."/>
            <person name="Aubourg S."/>
            <person name="Chefdor F."/>
            <person name="Cooke R."/>
            <person name="Berger C."/>
            <person name="Monfort A."/>
            <person name="Casacuberta E."/>
            <person name="Gibbons T."/>
            <person name="Weber N."/>
            <person name="Vandenbol M."/>
            <person name="Bargues M."/>
            <person name="Terol J."/>
            <person name="Torres A."/>
            <person name="Perez-Perez A."/>
            <person name="Purnelle B."/>
            <person name="Bent E."/>
            <person name="Johnson S."/>
            <person name="Tacon D."/>
            <person name="Jesse T."/>
            <person name="Heijnen L."/>
            <person name="Schwarz S."/>
            <person name="Scholler P."/>
            <person name="Heber S."/>
            <person name="Francs P."/>
            <person name="Bielke C."/>
            <person name="Frishman D."/>
            <person name="Haase D."/>
            <person name="Lemcke K."/>
            <person name="Mewes H.-W."/>
            <person name="Stocker S."/>
            <person name="Zaccaria P."/>
            <person name="Bevan M."/>
            <person name="Wilson R.K."/>
            <person name="de la Bastide M."/>
            <person name="Habermann K."/>
            <person name="Parnell L."/>
            <person name="Dedhia N."/>
            <person name="Gnoj L."/>
            <person name="Schutz K."/>
            <person name="Huang E."/>
            <person name="Spiegel L."/>
            <person name="Sekhon M."/>
            <person name="Murray J."/>
            <person name="Sheet P."/>
            <person name="Cordes M."/>
            <person name="Abu-Threideh J."/>
            <person name="Stoneking T."/>
            <person name="Kalicki J."/>
            <person name="Graves T."/>
            <person name="Harmon G."/>
            <person name="Edwards J."/>
            <person name="Latreille P."/>
            <person name="Courtney L."/>
            <person name="Cloud J."/>
            <person name="Abbott A."/>
            <person name="Scott K."/>
            <person name="Johnson D."/>
            <person name="Minx P."/>
            <person name="Bentley D."/>
            <person name="Fulton B."/>
            <person name="Miller N."/>
            <person name="Greco T."/>
            <person name="Kemp K."/>
            <person name="Kramer J."/>
            <person name="Fulton L."/>
            <person name="Mardis E."/>
            <person name="Dante M."/>
            <person name="Pepin K."/>
            <person name="Hillier L.W."/>
            <person name="Nelson J."/>
            <person name="Spieth J."/>
            <person name="Ryan E."/>
            <person name="Andrews S."/>
            <person name="Geisel C."/>
            <person name="Layman D."/>
            <person name="Du H."/>
            <person name="Ali J."/>
            <person name="Berghoff A."/>
            <person name="Jones K."/>
            <person name="Drone K."/>
            <person name="Cotton M."/>
            <person name="Joshu C."/>
            <person name="Antonoiu B."/>
            <person name="Zidanic M."/>
            <person name="Strong C."/>
            <person name="Sun H."/>
            <person name="Lamar B."/>
            <person name="Yordan C."/>
            <person name="Ma P."/>
            <person name="Zhong J."/>
            <person name="Preston R."/>
            <person name="Vil D."/>
            <person name="Shekher M."/>
            <person name="Matero A."/>
            <person name="Shah R."/>
            <person name="Swaby I.K."/>
            <person name="O'Shaughnessy A."/>
            <person name="Rodriguez M."/>
            <person name="Hoffman J."/>
            <person name="Till S."/>
            <person name="Granat S."/>
            <person name="Shohdy N."/>
            <person name="Hasegawa A."/>
            <person name="Hameed A."/>
            <person name="Lodhi M."/>
            <person name="Johnson A."/>
            <person name="Chen E."/>
            <person name="Marra M.A."/>
            <person name="Martienssen R."/>
            <person name="McCombie W.R."/>
        </authorList>
    </citation>
    <scope>NUCLEOTIDE SEQUENCE [LARGE SCALE GENOMIC DNA]</scope>
    <source>
        <strain>cv. Columbia</strain>
    </source>
</reference>
<reference key="3">
    <citation type="journal article" date="2017" name="Plant J.">
        <title>Araport11: a complete reannotation of the Arabidopsis thaliana reference genome.</title>
        <authorList>
            <person name="Cheng C.Y."/>
            <person name="Krishnakumar V."/>
            <person name="Chan A.P."/>
            <person name="Thibaud-Nissen F."/>
            <person name="Schobel S."/>
            <person name="Town C.D."/>
        </authorList>
    </citation>
    <scope>GENOME REANNOTATION</scope>
    <source>
        <strain>cv. Columbia</strain>
    </source>
</reference>
<reference key="4">
    <citation type="submission" date="2004-09" db="EMBL/GenBank/DDBJ databases">
        <title>Large-scale analysis of RIKEN Arabidopsis full-length (RAFL) cDNAs.</title>
        <authorList>
            <person name="Totoki Y."/>
            <person name="Seki M."/>
            <person name="Ishida J."/>
            <person name="Nakajima M."/>
            <person name="Enju A."/>
            <person name="Kamiya A."/>
            <person name="Narusaka M."/>
            <person name="Shin-i T."/>
            <person name="Nakagawa M."/>
            <person name="Sakamoto N."/>
            <person name="Oishi K."/>
            <person name="Kohara Y."/>
            <person name="Kobayashi M."/>
            <person name="Toyoda A."/>
            <person name="Sakaki Y."/>
            <person name="Sakurai T."/>
            <person name="Iida K."/>
            <person name="Akiyama K."/>
            <person name="Satou M."/>
            <person name="Toyoda T."/>
            <person name="Konagaya A."/>
            <person name="Carninci P."/>
            <person name="Kawai J."/>
            <person name="Hayashizaki Y."/>
            <person name="Shinozaki K."/>
        </authorList>
    </citation>
    <scope>NUCLEOTIDE SEQUENCE [LARGE SCALE MRNA]</scope>
    <source>
        <strain>cv. Columbia</strain>
    </source>
</reference>
<reference key="5">
    <citation type="submission" date="2006-08" db="EMBL/GenBank/DDBJ databases">
        <title>Arabidopsis ORF Clones.</title>
        <authorList>
            <person name="Quinitio C."/>
            <person name="Chen H."/>
            <person name="Kim C.J."/>
            <person name="Shinn P."/>
            <person name="Ecker J.R."/>
        </authorList>
    </citation>
    <scope>NUCLEOTIDE SEQUENCE [LARGE SCALE MRNA]</scope>
    <source>
        <strain>cv. Columbia</strain>
    </source>
</reference>
<reference key="6">
    <citation type="journal article" date="1999" name="Development">
        <title>Regulation of differential growth in the apical hook of Arabidopsis.</title>
        <authorList>
            <person name="Raz V."/>
            <person name="Ecker J.R."/>
        </authorList>
    </citation>
    <scope>DISRUPTION PHENOTYPE</scope>
</reference>
<reference key="7">
    <citation type="journal article" date="2006" name="Plant Cell Physiol.">
        <title>Involvement of HLS1 in sugar and auxin signaling in Arabidopsis leaves.</title>
        <authorList>
            <person name="Ohto M.A."/>
            <person name="Hayashi S."/>
            <person name="Sawa S."/>
            <person name="Hashimoto-Ohta A."/>
            <person name="Nakamura K."/>
        </authorList>
    </citation>
    <scope>FUNCTION</scope>
</reference>
<reference key="8">
    <citation type="journal article" date="2008" name="Biosci. Biotechnol. Biochem.">
        <title>A small subfamily of Arabidopsis RADIALIS-LIKE SANT/MYB genes: a link to HOOKLESS1-mediated signal transduction during early morphogenesis.</title>
        <authorList>
            <person name="Hamaguchi A."/>
            <person name="Yamashino T."/>
            <person name="Koizumi N."/>
            <person name="Kiba T."/>
            <person name="Kojima M."/>
            <person name="Sakakibara H."/>
            <person name="Mizuno T."/>
        </authorList>
    </citation>
    <scope>DISRUPTION PHENOTYPE</scope>
</reference>
<reference key="9">
    <citation type="journal article" date="2012" name="Cell Res.">
        <title>Coordinated regulation of apical hook development by gibberellins and ethylene in etiolated Arabidopsis seedlings.</title>
        <authorList>
            <person name="An F."/>
            <person name="Zhang X."/>
            <person name="Zhu Z."/>
            <person name="Ji Y."/>
            <person name="He W."/>
            <person name="Jiang Z."/>
            <person name="Li M."/>
            <person name="Guo H."/>
        </authorList>
    </citation>
    <scope>FUNCTION</scope>
</reference>
<accession>Q42381</accession>
<keyword id="KW-0012">Acyltransferase</keyword>
<keyword id="KW-0341">Growth regulation</keyword>
<keyword id="KW-1185">Reference proteome</keyword>
<keyword id="KW-0808">Transferase</keyword>
<gene>
    <name type="primary">HLS1</name>
    <name type="synonym">COP3</name>
    <name type="synonym">UNS2</name>
    <name type="ordered locus">At4g37580</name>
    <name type="ORF">F19F18.70</name>
</gene>
<comment type="function">
    <text evidence="3 5">Ethylene-responsive N-acetyltransferase required for differential cell elongation in the hypocotyl. Regulates apical hook formation of dark-grown seedlings. May control differential cell growth by regulating auxin activity. May be involved in negative feedback regulation of auxin homeostasis through the control of GH3-like genes. Modulates de novo shoot organogenesis.</text>
</comment>
<comment type="interaction">
    <interactant intactId="EBI-15207218">
        <id>Q42381</id>
    </interactant>
    <interactant intactId="EBI-4465274">
        <id>Q9SAI2</id>
        <label>CAF1-6</label>
    </interactant>
    <organismsDiffer>false</organismsDiffer>
    <experiments>4</experiments>
</comment>
<comment type="induction">
    <text evidence="6">By ethylene.</text>
</comment>
<comment type="disruption phenotype">
    <text evidence="2 4 6">Unable to develop apical hook in the dark. Reduced length of dark-grown hypocotyls and reduced leaf initiation rate in light-grown seedlings.</text>
</comment>
<comment type="similarity">
    <text evidence="7">Belongs to the acetyltransferase family.</text>
</comment>
<proteinExistence type="evidence at protein level"/>
<organism>
    <name type="scientific">Arabidopsis thaliana</name>
    <name type="common">Mouse-ear cress</name>
    <dbReference type="NCBI Taxonomy" id="3702"/>
    <lineage>
        <taxon>Eukaryota</taxon>
        <taxon>Viridiplantae</taxon>
        <taxon>Streptophyta</taxon>
        <taxon>Embryophyta</taxon>
        <taxon>Tracheophyta</taxon>
        <taxon>Spermatophyta</taxon>
        <taxon>Magnoliopsida</taxon>
        <taxon>eudicotyledons</taxon>
        <taxon>Gunneridae</taxon>
        <taxon>Pentapetalae</taxon>
        <taxon>rosids</taxon>
        <taxon>malvids</taxon>
        <taxon>Brassicales</taxon>
        <taxon>Brassicaceae</taxon>
        <taxon>Camelineae</taxon>
        <taxon>Arabidopsis</taxon>
    </lineage>
</organism>
<dbReference type="EC" id="2.3.1.-"/>
<dbReference type="EMBL" id="U50399">
    <property type="protein sequence ID" value="AAB03773.1"/>
    <property type="molecule type" value="mRNA"/>
</dbReference>
<dbReference type="EMBL" id="U50400">
    <property type="protein sequence ID" value="AAB03774.1"/>
    <property type="molecule type" value="Genomic_DNA"/>
</dbReference>
<dbReference type="EMBL" id="AL035605">
    <property type="protein sequence ID" value="CAB38297.1"/>
    <property type="molecule type" value="Genomic_DNA"/>
</dbReference>
<dbReference type="EMBL" id="AL161591">
    <property type="protein sequence ID" value="CAB80423.1"/>
    <property type="molecule type" value="Genomic_DNA"/>
</dbReference>
<dbReference type="EMBL" id="CP002687">
    <property type="protein sequence ID" value="AEE86813.1"/>
    <property type="molecule type" value="Genomic_DNA"/>
</dbReference>
<dbReference type="EMBL" id="AK175660">
    <property type="protein sequence ID" value="BAD43423.1"/>
    <property type="molecule type" value="mRNA"/>
</dbReference>
<dbReference type="EMBL" id="AK176117">
    <property type="protein sequence ID" value="BAD43880.1"/>
    <property type="molecule type" value="mRNA"/>
</dbReference>
<dbReference type="EMBL" id="BT026435">
    <property type="protein sequence ID" value="ABH04542.1"/>
    <property type="molecule type" value="mRNA"/>
</dbReference>
<dbReference type="PIR" id="S71236">
    <property type="entry name" value="S71236"/>
</dbReference>
<dbReference type="RefSeq" id="NP_195474.1">
    <property type="nucleotide sequence ID" value="NM_119922.5"/>
</dbReference>
<dbReference type="BioGRID" id="15194">
    <property type="interactions" value="3"/>
</dbReference>
<dbReference type="FunCoup" id="Q42381">
    <property type="interactions" value="120"/>
</dbReference>
<dbReference type="IntAct" id="Q42381">
    <property type="interactions" value="3"/>
</dbReference>
<dbReference type="STRING" id="3702.Q42381"/>
<dbReference type="PaxDb" id="3702-AT4G37580.1"/>
<dbReference type="ProteomicsDB" id="230351"/>
<dbReference type="EnsemblPlants" id="AT4G37580.1">
    <property type="protein sequence ID" value="AT4G37580.1"/>
    <property type="gene ID" value="AT4G37580"/>
</dbReference>
<dbReference type="GeneID" id="829913"/>
<dbReference type="Gramene" id="AT4G37580.1">
    <property type="protein sequence ID" value="AT4G37580.1"/>
    <property type="gene ID" value="AT4G37580"/>
</dbReference>
<dbReference type="KEGG" id="ath:AT4G37580"/>
<dbReference type="Araport" id="AT4G37580"/>
<dbReference type="TAIR" id="AT4G37580">
    <property type="gene designation" value="HLS1"/>
</dbReference>
<dbReference type="eggNOG" id="ENOG502QQCN">
    <property type="taxonomic scope" value="Eukaryota"/>
</dbReference>
<dbReference type="HOGENOM" id="CLU_057213_0_0_1"/>
<dbReference type="InParanoid" id="Q42381"/>
<dbReference type="OMA" id="RIEEWFR"/>
<dbReference type="PhylomeDB" id="Q42381"/>
<dbReference type="PRO" id="PR:Q42381"/>
<dbReference type="Proteomes" id="UP000006548">
    <property type="component" value="Chromosome 4"/>
</dbReference>
<dbReference type="ExpressionAtlas" id="Q42381">
    <property type="expression patterns" value="baseline and differential"/>
</dbReference>
<dbReference type="GO" id="GO:0008080">
    <property type="term" value="F:N-acetyltransferase activity"/>
    <property type="evidence" value="ECO:0000250"/>
    <property type="project" value="TAIR"/>
</dbReference>
<dbReference type="GO" id="GO:0009734">
    <property type="term" value="P:auxin-activated signaling pathway"/>
    <property type="evidence" value="ECO:0000315"/>
    <property type="project" value="TAIR"/>
</dbReference>
<dbReference type="GO" id="GO:0009640">
    <property type="term" value="P:photomorphogenesis"/>
    <property type="evidence" value="ECO:0000315"/>
    <property type="project" value="TAIR"/>
</dbReference>
<dbReference type="GO" id="GO:0009723">
    <property type="term" value="P:response to ethylene"/>
    <property type="evidence" value="ECO:0000315"/>
    <property type="project" value="TAIR"/>
</dbReference>
<dbReference type="GO" id="GO:0009826">
    <property type="term" value="P:unidimensional cell growth"/>
    <property type="evidence" value="ECO:0000315"/>
    <property type="project" value="TAIR"/>
</dbReference>
<dbReference type="CDD" id="cd04301">
    <property type="entry name" value="NAT_SF"/>
    <property type="match status" value="1"/>
</dbReference>
<dbReference type="FunFam" id="3.40.630.30:FF:000084">
    <property type="entry name" value="Probable N-acetyltransferase HLS1-like"/>
    <property type="match status" value="1"/>
</dbReference>
<dbReference type="Gene3D" id="3.40.630.30">
    <property type="match status" value="1"/>
</dbReference>
<dbReference type="InterPro" id="IPR016181">
    <property type="entry name" value="Acyl_CoA_acyltransferase"/>
</dbReference>
<dbReference type="InterPro" id="IPR000182">
    <property type="entry name" value="GNAT_dom"/>
</dbReference>
<dbReference type="InterPro" id="IPR052810">
    <property type="entry name" value="Plant_NAT"/>
</dbReference>
<dbReference type="PANTHER" id="PTHR47370">
    <property type="entry name" value="ACYL-COA N-ACYLTRANSFERASES (NAT) SUPERFAMILY PROTEIN"/>
    <property type="match status" value="1"/>
</dbReference>
<dbReference type="PANTHER" id="PTHR47370:SF10">
    <property type="entry name" value="N-ACETYLTRANSFERASE HLS1-RELATED"/>
    <property type="match status" value="1"/>
</dbReference>
<dbReference type="Pfam" id="PF00583">
    <property type="entry name" value="Acetyltransf_1"/>
    <property type="match status" value="1"/>
</dbReference>
<dbReference type="SUPFAM" id="SSF55729">
    <property type="entry name" value="Acyl-CoA N-acyltransferases (Nat)"/>
    <property type="match status" value="1"/>
</dbReference>
<dbReference type="PROSITE" id="PS51186">
    <property type="entry name" value="GNAT"/>
    <property type="match status" value="1"/>
</dbReference>
<feature type="chain" id="PRO_0000423403" description="Probable N-acetyltransferase HLS1">
    <location>
        <begin position="1"/>
        <end position="403"/>
    </location>
</feature>
<feature type="domain" description="N-acetyltransferase" evidence="1">
    <location>
        <begin position="2"/>
        <end position="177"/>
    </location>
</feature>
<feature type="mutagenesis site" description="In hls1-6; strong allele." evidence="6">
    <original>L</original>
    <variation>W</variation>
    <location>
        <position position="327"/>
    </location>
</feature>
<feature type="mutagenesis site" description="In hls1-1 and hls4-1; strong allele." evidence="6">
    <original>E</original>
    <variation>K</variation>
    <location>
        <position position="346"/>
    </location>
</feature>
<protein>
    <recommendedName>
        <fullName>Probable N-acetyltransferase HLS1</fullName>
        <ecNumber>2.3.1.-</ecNumber>
    </recommendedName>
    <alternativeName>
        <fullName>Protein CONSTITUTIVE PHOTOMORPHOGENIC 3</fullName>
    </alternativeName>
    <alternativeName>
        <fullName>Protein HOOKLESS 1</fullName>
    </alternativeName>
    <alternativeName>
        <fullName>Protein UNUSUAL SUGAR RESPONSE 2</fullName>
    </alternativeName>
</protein>
<name>HLS1_ARATH</name>
<sequence length="403" mass="44934">MTVVREYDPTRDLVGVEDVERRCEVGPSGKLSLFTDLLGDPICRIRHSPSYLMLVAEMGTEKKEIVGMIRGCIKTVTCGQKLDLNHKSQNDVVKPLYTKLAYVLGLRVSPFHRRQGIGFKLVKMMEEWFRQNGAEYSYIATENDNQASVNLFTGKCGYSEFRTPSILVNPVYAHRVNVSRRVTVIKLEPVDAETLYRIRFSTTEFFPRDIDSVLNNKLSLGTFVAVPRGSCYGSGSGSWPGSAKFLEYPPESWAVLSVWNCKDSFLLEVRGASRLRRVVAKTTRVVDKTLPFLKLPSIPSVFEPFGLHFMYGIGGEGPRAVKMVKSLCAHAHNLAKAGGCGVVAAEVAGEDPLRRGIPHWKVLSCDEDLWCIKRLGDDYSDGVVGDWTKSPPGVSIFVDPREF</sequence>